<reference key="1">
    <citation type="journal article" date="1992" name="Nature">
        <title>The C. elegans genome sequencing project: a beginning.</title>
        <authorList>
            <person name="Sulston J."/>
            <person name="Du Z."/>
            <person name="Thomas K."/>
            <person name="Wilson R."/>
            <person name="Hillier L."/>
            <person name="Staden R."/>
            <person name="Halloran N."/>
            <person name="Green P."/>
            <person name="Thierry-Mieg J."/>
            <person name="Qiu L."/>
            <person name="Dear S."/>
            <person name="Coulson A."/>
            <person name="Craxton M."/>
            <person name="Durbin R."/>
            <person name="Berks M."/>
            <person name="Metzstein M."/>
            <person name="Hawkins T."/>
            <person name="Ainscough R."/>
            <person name="Waterston R."/>
        </authorList>
    </citation>
    <scope>NUCLEOTIDE SEQUENCE [LARGE SCALE GENOMIC DNA]</scope>
    <source>
        <strain>Bristol N2</strain>
    </source>
</reference>
<reference key="2">
    <citation type="journal article" date="1998" name="Science">
        <title>Genome sequence of the nematode C. elegans: a platform for investigating biology.</title>
        <authorList>
            <consortium name="The C. elegans sequencing consortium"/>
        </authorList>
    </citation>
    <scope>NUCLEOTIDE SEQUENCE [LARGE SCALE GENOMIC DNA]</scope>
    <source>
        <strain>Bristol N2</strain>
    </source>
</reference>
<name>YOW7_CAEEL</name>
<keyword id="KW-1185">Reference proteome</keyword>
<proteinExistence type="predicted"/>
<protein>
    <recommendedName>
        <fullName>Uncharacterized protein ZK643.7</fullName>
    </recommendedName>
</protein>
<accession>P30653</accession>
<sequence length="109" mass="12834">MHANPTEETNILYFKFFSGRSIQVGNNRKSCKKLPDFEYISKGGIRCCIIHFFKIYFTPEMFFHLNDFPKLDNSGNETFILSRSLWVRFFLLVQLLVLCKNLNGKLKSK</sequence>
<gene>
    <name type="ORF">ZK643.7</name>
</gene>
<dbReference type="EMBL" id="Z11126">
    <property type="protein sequence ID" value="CAA77469.1"/>
    <property type="molecule type" value="Genomic_DNA"/>
</dbReference>
<dbReference type="PIR" id="S23245">
    <property type="entry name" value="S23245"/>
</dbReference>
<dbReference type="RefSeq" id="NP_498976.1">
    <property type="nucleotide sequence ID" value="NM_066575.1"/>
</dbReference>
<dbReference type="PaxDb" id="6239-ZK643.7"/>
<dbReference type="UCSC" id="ZK643.7">
    <property type="organism name" value="c. elegans"/>
</dbReference>
<dbReference type="WormBase" id="ZK643.7">
    <property type="protein sequence ID" value="CE00445"/>
    <property type="gene ID" value="WBGene00014038"/>
</dbReference>
<dbReference type="HOGENOM" id="CLU_2186310_0_0_1"/>
<dbReference type="InParanoid" id="P30653"/>
<dbReference type="PRO" id="PR:P30653"/>
<dbReference type="Proteomes" id="UP000001940">
    <property type="component" value="Chromosome III"/>
</dbReference>
<feature type="chain" id="PRO_0000065534" description="Uncharacterized protein ZK643.7">
    <location>
        <begin position="1"/>
        <end position="109"/>
    </location>
</feature>
<organism>
    <name type="scientific">Caenorhabditis elegans</name>
    <dbReference type="NCBI Taxonomy" id="6239"/>
    <lineage>
        <taxon>Eukaryota</taxon>
        <taxon>Metazoa</taxon>
        <taxon>Ecdysozoa</taxon>
        <taxon>Nematoda</taxon>
        <taxon>Chromadorea</taxon>
        <taxon>Rhabditida</taxon>
        <taxon>Rhabditina</taxon>
        <taxon>Rhabditomorpha</taxon>
        <taxon>Rhabditoidea</taxon>
        <taxon>Rhabditidae</taxon>
        <taxon>Peloderinae</taxon>
        <taxon>Caenorhabditis</taxon>
    </lineage>
</organism>